<reference key="1">
    <citation type="journal article" date="2000" name="Science">
        <title>The genome sequence of Drosophila melanogaster.</title>
        <authorList>
            <person name="Adams M.D."/>
            <person name="Celniker S.E."/>
            <person name="Holt R.A."/>
            <person name="Evans C.A."/>
            <person name="Gocayne J.D."/>
            <person name="Amanatides P.G."/>
            <person name="Scherer S.E."/>
            <person name="Li P.W."/>
            <person name="Hoskins R.A."/>
            <person name="Galle R.F."/>
            <person name="George R.A."/>
            <person name="Lewis S.E."/>
            <person name="Richards S."/>
            <person name="Ashburner M."/>
            <person name="Henderson S.N."/>
            <person name="Sutton G.G."/>
            <person name="Wortman J.R."/>
            <person name="Yandell M.D."/>
            <person name="Zhang Q."/>
            <person name="Chen L.X."/>
            <person name="Brandon R.C."/>
            <person name="Rogers Y.-H.C."/>
            <person name="Blazej R.G."/>
            <person name="Champe M."/>
            <person name="Pfeiffer B.D."/>
            <person name="Wan K.H."/>
            <person name="Doyle C."/>
            <person name="Baxter E.G."/>
            <person name="Helt G."/>
            <person name="Nelson C.R."/>
            <person name="Miklos G.L.G."/>
            <person name="Abril J.F."/>
            <person name="Agbayani A."/>
            <person name="An H.-J."/>
            <person name="Andrews-Pfannkoch C."/>
            <person name="Baldwin D."/>
            <person name="Ballew R.M."/>
            <person name="Basu A."/>
            <person name="Baxendale J."/>
            <person name="Bayraktaroglu L."/>
            <person name="Beasley E.M."/>
            <person name="Beeson K.Y."/>
            <person name="Benos P.V."/>
            <person name="Berman B.P."/>
            <person name="Bhandari D."/>
            <person name="Bolshakov S."/>
            <person name="Borkova D."/>
            <person name="Botchan M.R."/>
            <person name="Bouck J."/>
            <person name="Brokstein P."/>
            <person name="Brottier P."/>
            <person name="Burtis K.C."/>
            <person name="Busam D.A."/>
            <person name="Butler H."/>
            <person name="Cadieu E."/>
            <person name="Center A."/>
            <person name="Chandra I."/>
            <person name="Cherry J.M."/>
            <person name="Cawley S."/>
            <person name="Dahlke C."/>
            <person name="Davenport L.B."/>
            <person name="Davies P."/>
            <person name="de Pablos B."/>
            <person name="Delcher A."/>
            <person name="Deng Z."/>
            <person name="Mays A.D."/>
            <person name="Dew I."/>
            <person name="Dietz S.M."/>
            <person name="Dodson K."/>
            <person name="Doup L.E."/>
            <person name="Downes M."/>
            <person name="Dugan-Rocha S."/>
            <person name="Dunkov B.C."/>
            <person name="Dunn P."/>
            <person name="Durbin K.J."/>
            <person name="Evangelista C.C."/>
            <person name="Ferraz C."/>
            <person name="Ferriera S."/>
            <person name="Fleischmann W."/>
            <person name="Fosler C."/>
            <person name="Gabrielian A.E."/>
            <person name="Garg N.S."/>
            <person name="Gelbart W.M."/>
            <person name="Glasser K."/>
            <person name="Glodek A."/>
            <person name="Gong F."/>
            <person name="Gorrell J.H."/>
            <person name="Gu Z."/>
            <person name="Guan P."/>
            <person name="Harris M."/>
            <person name="Harris N.L."/>
            <person name="Harvey D.A."/>
            <person name="Heiman T.J."/>
            <person name="Hernandez J.R."/>
            <person name="Houck J."/>
            <person name="Hostin D."/>
            <person name="Houston K.A."/>
            <person name="Howland T.J."/>
            <person name="Wei M.-H."/>
            <person name="Ibegwam C."/>
            <person name="Jalali M."/>
            <person name="Kalush F."/>
            <person name="Karpen G.H."/>
            <person name="Ke Z."/>
            <person name="Kennison J.A."/>
            <person name="Ketchum K.A."/>
            <person name="Kimmel B.E."/>
            <person name="Kodira C.D."/>
            <person name="Kraft C.L."/>
            <person name="Kravitz S."/>
            <person name="Kulp D."/>
            <person name="Lai Z."/>
            <person name="Lasko P."/>
            <person name="Lei Y."/>
            <person name="Levitsky A.A."/>
            <person name="Li J.H."/>
            <person name="Li Z."/>
            <person name="Liang Y."/>
            <person name="Lin X."/>
            <person name="Liu X."/>
            <person name="Mattei B."/>
            <person name="McIntosh T.C."/>
            <person name="McLeod M.P."/>
            <person name="McPherson D."/>
            <person name="Merkulov G."/>
            <person name="Milshina N.V."/>
            <person name="Mobarry C."/>
            <person name="Morris J."/>
            <person name="Moshrefi A."/>
            <person name="Mount S.M."/>
            <person name="Moy M."/>
            <person name="Murphy B."/>
            <person name="Murphy L."/>
            <person name="Muzny D.M."/>
            <person name="Nelson D.L."/>
            <person name="Nelson D.R."/>
            <person name="Nelson K.A."/>
            <person name="Nixon K."/>
            <person name="Nusskern D.R."/>
            <person name="Pacleb J.M."/>
            <person name="Palazzolo M."/>
            <person name="Pittman G.S."/>
            <person name="Pan S."/>
            <person name="Pollard J."/>
            <person name="Puri V."/>
            <person name="Reese M.G."/>
            <person name="Reinert K."/>
            <person name="Remington K."/>
            <person name="Saunders R.D.C."/>
            <person name="Scheeler F."/>
            <person name="Shen H."/>
            <person name="Shue B.C."/>
            <person name="Siden-Kiamos I."/>
            <person name="Simpson M."/>
            <person name="Skupski M.P."/>
            <person name="Smith T.J."/>
            <person name="Spier E."/>
            <person name="Spradling A.C."/>
            <person name="Stapleton M."/>
            <person name="Strong R."/>
            <person name="Sun E."/>
            <person name="Svirskas R."/>
            <person name="Tector C."/>
            <person name="Turner R."/>
            <person name="Venter E."/>
            <person name="Wang A.H."/>
            <person name="Wang X."/>
            <person name="Wang Z.-Y."/>
            <person name="Wassarman D.A."/>
            <person name="Weinstock G.M."/>
            <person name="Weissenbach J."/>
            <person name="Williams S.M."/>
            <person name="Woodage T."/>
            <person name="Worley K.C."/>
            <person name="Wu D."/>
            <person name="Yang S."/>
            <person name="Yao Q.A."/>
            <person name="Ye J."/>
            <person name="Yeh R.-F."/>
            <person name="Zaveri J.S."/>
            <person name="Zhan M."/>
            <person name="Zhang G."/>
            <person name="Zhao Q."/>
            <person name="Zheng L."/>
            <person name="Zheng X.H."/>
            <person name="Zhong F.N."/>
            <person name="Zhong W."/>
            <person name="Zhou X."/>
            <person name="Zhu S.C."/>
            <person name="Zhu X."/>
            <person name="Smith H.O."/>
            <person name="Gibbs R.A."/>
            <person name="Myers E.W."/>
            <person name="Rubin G.M."/>
            <person name="Venter J.C."/>
        </authorList>
    </citation>
    <scope>NUCLEOTIDE SEQUENCE [LARGE SCALE GENOMIC DNA]</scope>
    <source>
        <strain>Berkeley</strain>
    </source>
</reference>
<reference key="2">
    <citation type="journal article" date="2002" name="Genome Biol.">
        <title>Annotation of the Drosophila melanogaster euchromatic genome: a systematic review.</title>
        <authorList>
            <person name="Misra S."/>
            <person name="Crosby M.A."/>
            <person name="Mungall C.J."/>
            <person name="Matthews B.B."/>
            <person name="Campbell K.S."/>
            <person name="Hradecky P."/>
            <person name="Huang Y."/>
            <person name="Kaminker J.S."/>
            <person name="Millburn G.H."/>
            <person name="Prochnik S.E."/>
            <person name="Smith C.D."/>
            <person name="Tupy J.L."/>
            <person name="Whitfield E.J."/>
            <person name="Bayraktaroglu L."/>
            <person name="Berman B.P."/>
            <person name="Bettencourt B.R."/>
            <person name="Celniker S.E."/>
            <person name="de Grey A.D.N.J."/>
            <person name="Drysdale R.A."/>
            <person name="Harris N.L."/>
            <person name="Richter J."/>
            <person name="Russo S."/>
            <person name="Schroeder A.J."/>
            <person name="Shu S.Q."/>
            <person name="Stapleton M."/>
            <person name="Yamada C."/>
            <person name="Ashburner M."/>
            <person name="Gelbart W.M."/>
            <person name="Rubin G.M."/>
            <person name="Lewis S.E."/>
        </authorList>
    </citation>
    <scope>GENOME REANNOTATION</scope>
    <source>
        <strain>Berkeley</strain>
    </source>
</reference>
<reference key="3">
    <citation type="journal article" date="2001" name="Curr. Biol.">
        <title>Spatially restricted expression of candidate taste receptors in the Drosophila gustatory system.</title>
        <authorList>
            <person name="Dunipace L."/>
            <person name="Meister S."/>
            <person name="McNealy C."/>
            <person name="Amrein H."/>
        </authorList>
    </citation>
    <scope>IDENTIFICATION</scope>
</reference>
<reference key="4">
    <citation type="journal article" date="2011" name="J. Neurosci.">
        <title>Molecular and cellular organization of the taste system in the Drosophila larva.</title>
        <authorList>
            <person name="Kwon J.Y."/>
            <person name="Dahanukar A."/>
            <person name="Weiss L.A."/>
            <person name="Carlson J.R."/>
        </authorList>
    </citation>
    <scope>TISSUE SPECIFICITY</scope>
</reference>
<gene>
    <name type="primary">Gr22a</name>
    <name type="ORF">CG31662</name>
</gene>
<feature type="chain" id="PRO_0000216493" description="Putative gustatory receptor 22a">
    <location>
        <begin position="1"/>
        <end position="394"/>
    </location>
</feature>
<feature type="topological domain" description="Cytoplasmic" evidence="1">
    <location>
        <begin position="1"/>
        <end position="16"/>
    </location>
</feature>
<feature type="transmembrane region" description="Helical; Name=1" evidence="2">
    <location>
        <begin position="17"/>
        <end position="37"/>
    </location>
</feature>
<feature type="topological domain" description="Extracellular" evidence="1">
    <location>
        <begin position="38"/>
        <end position="47"/>
    </location>
</feature>
<feature type="transmembrane region" description="Helical; Name=2" evidence="2">
    <location>
        <begin position="48"/>
        <end position="68"/>
    </location>
</feature>
<feature type="topological domain" description="Cytoplasmic" evidence="1">
    <location>
        <begin position="69"/>
        <end position="148"/>
    </location>
</feature>
<feature type="transmembrane region" description="Helical; Name=3" evidence="2">
    <location>
        <begin position="149"/>
        <end position="169"/>
    </location>
</feature>
<feature type="topological domain" description="Extracellular" evidence="1">
    <location>
        <position position="170"/>
    </location>
</feature>
<feature type="transmembrane region" description="Helical; Name=4" evidence="2">
    <location>
        <begin position="171"/>
        <end position="191"/>
    </location>
</feature>
<feature type="topological domain" description="Cytoplasmic" evidence="1">
    <location>
        <begin position="192"/>
        <end position="256"/>
    </location>
</feature>
<feature type="transmembrane region" description="Helical; Name=5" evidence="2">
    <location>
        <begin position="257"/>
        <end position="277"/>
    </location>
</feature>
<feature type="topological domain" description="Extracellular" evidence="1">
    <location>
        <begin position="278"/>
        <end position="281"/>
    </location>
</feature>
<feature type="transmembrane region" description="Helical; Name=6" evidence="2">
    <location>
        <begin position="282"/>
        <end position="302"/>
    </location>
</feature>
<feature type="topological domain" description="Cytoplasmic" evidence="1">
    <location>
        <begin position="303"/>
        <end position="361"/>
    </location>
</feature>
<feature type="transmembrane region" description="Helical; Name=7" evidence="2">
    <location>
        <begin position="362"/>
        <end position="382"/>
    </location>
</feature>
<feature type="topological domain" description="Extracellular" evidence="1">
    <location>
        <begin position="383"/>
        <end position="394"/>
    </location>
</feature>
<feature type="glycosylation site" description="N-linked (GlcNAc...) asparagine" evidence="2">
    <location>
        <position position="44"/>
    </location>
</feature>
<feature type="glycosylation site" description="N-linked (GlcNAc...) asparagine" evidence="2">
    <location>
        <position position="278"/>
    </location>
</feature>
<evidence type="ECO:0000250" key="1"/>
<evidence type="ECO:0000255" key="2"/>
<evidence type="ECO:0000269" key="3">
    <source>
    </source>
</evidence>
<evidence type="ECO:0000305" key="4"/>
<sequence length="394" mass="46132">MSQPKRIHRICKGLARFTIRATLYGSWVLGLFPFTFDSRKRRLNRSKWLLAYGLVLNLTLLVLSMLPSTDDHNSVKVEVFQRNPLVKQVEELVEVISLITTLVTHLRTFSRSSELVEILNELLVLDKNHFSKLMLSECHTFNRYVIEKGLVIILEIGSSLVLYFGIPNSKIVVYEAVCIYIVQLEVLMVVMHFHLAVIYIYRYLWIINGQLLDMASRLRRGDSVDPDRIQLLLWLYSRLLDLNHRLTAIYDIQVTLFMATLFSVNIIVGHVLVICWINITRFSLLVIFLLFPQALIINFWDLWQGIAFCDLAESTGKKTSMILKLFNDMENMDQETERRVTEFTLFCSHRRLKVCHLGLLDINYEMGFRMIITNILYVVFLVQFDYMNLKFKTD</sequence>
<proteinExistence type="evidence at transcript level"/>
<organism>
    <name type="scientific">Drosophila melanogaster</name>
    <name type="common">Fruit fly</name>
    <dbReference type="NCBI Taxonomy" id="7227"/>
    <lineage>
        <taxon>Eukaryota</taxon>
        <taxon>Metazoa</taxon>
        <taxon>Ecdysozoa</taxon>
        <taxon>Arthropoda</taxon>
        <taxon>Hexapoda</taxon>
        <taxon>Insecta</taxon>
        <taxon>Pterygota</taxon>
        <taxon>Neoptera</taxon>
        <taxon>Endopterygota</taxon>
        <taxon>Diptera</taxon>
        <taxon>Brachycera</taxon>
        <taxon>Muscomorpha</taxon>
        <taxon>Ephydroidea</taxon>
        <taxon>Drosophilidae</taxon>
        <taxon>Drosophila</taxon>
        <taxon>Sophophora</taxon>
    </lineage>
</organism>
<accession>P58951</accession>
<protein>
    <recommendedName>
        <fullName>Putative gustatory receptor 22a</fullName>
    </recommendedName>
</protein>
<dbReference type="EMBL" id="AE014134">
    <property type="protein sequence ID" value="AAN10464.1"/>
    <property type="molecule type" value="Genomic_DNA"/>
</dbReference>
<dbReference type="RefSeq" id="NP_722733.1">
    <property type="nucleotide sequence ID" value="NM_164440.1"/>
</dbReference>
<dbReference type="SMR" id="P58951"/>
<dbReference type="FunCoup" id="P58951">
    <property type="interactions" value="21"/>
</dbReference>
<dbReference type="IntAct" id="P58951">
    <property type="interactions" value="1"/>
</dbReference>
<dbReference type="STRING" id="7227.FBpp0077565"/>
<dbReference type="GlyCosmos" id="P58951">
    <property type="glycosylation" value="2 sites, No reported glycans"/>
</dbReference>
<dbReference type="GlyGen" id="P58951">
    <property type="glycosylation" value="2 sites"/>
</dbReference>
<dbReference type="PaxDb" id="7227-FBpp0077565"/>
<dbReference type="EnsemblMetazoa" id="FBtr0077897">
    <property type="protein sequence ID" value="FBpp0077565"/>
    <property type="gene ID" value="FBgn0045501"/>
</dbReference>
<dbReference type="GeneID" id="117500"/>
<dbReference type="KEGG" id="dme:Dmel_CG31662"/>
<dbReference type="AGR" id="FB:FBgn0045501"/>
<dbReference type="CTD" id="117500"/>
<dbReference type="FlyBase" id="FBgn0045501">
    <property type="gene designation" value="Gr22a"/>
</dbReference>
<dbReference type="VEuPathDB" id="VectorBase:FBgn0045501"/>
<dbReference type="eggNOG" id="ENOG502T94A">
    <property type="taxonomic scope" value="Eukaryota"/>
</dbReference>
<dbReference type="GeneTree" id="ENSGT00940000170904"/>
<dbReference type="HOGENOM" id="CLU_033758_0_0_1"/>
<dbReference type="InParanoid" id="P58951"/>
<dbReference type="OMA" id="RFVWTIN"/>
<dbReference type="OrthoDB" id="8067175at2759"/>
<dbReference type="PhylomeDB" id="P58951"/>
<dbReference type="BioGRID-ORCS" id="117500">
    <property type="hits" value="0 hits in 1 CRISPR screen"/>
</dbReference>
<dbReference type="GenomeRNAi" id="117500"/>
<dbReference type="PRO" id="PR:P58951"/>
<dbReference type="Proteomes" id="UP000000803">
    <property type="component" value="Chromosome 2L"/>
</dbReference>
<dbReference type="GO" id="GO:0030424">
    <property type="term" value="C:axon"/>
    <property type="evidence" value="ECO:0000318"/>
    <property type="project" value="GO_Central"/>
</dbReference>
<dbReference type="GO" id="GO:0030425">
    <property type="term" value="C:dendrite"/>
    <property type="evidence" value="ECO:0000318"/>
    <property type="project" value="GO_Central"/>
</dbReference>
<dbReference type="GO" id="GO:0016020">
    <property type="term" value="C:membrane"/>
    <property type="evidence" value="ECO:0000303"/>
    <property type="project" value="UniProtKB"/>
</dbReference>
<dbReference type="GO" id="GO:0043025">
    <property type="term" value="C:neuronal cell body"/>
    <property type="evidence" value="ECO:0000318"/>
    <property type="project" value="GO_Central"/>
</dbReference>
<dbReference type="GO" id="GO:0005886">
    <property type="term" value="C:plasma membrane"/>
    <property type="evidence" value="ECO:0000250"/>
    <property type="project" value="FlyBase"/>
</dbReference>
<dbReference type="GO" id="GO:0015276">
    <property type="term" value="F:ligand-gated monoatomic ion channel activity"/>
    <property type="evidence" value="ECO:0000250"/>
    <property type="project" value="FlyBase"/>
</dbReference>
<dbReference type="GO" id="GO:0008527">
    <property type="term" value="F:taste receptor activity"/>
    <property type="evidence" value="ECO:0000303"/>
    <property type="project" value="UniProtKB"/>
</dbReference>
<dbReference type="GO" id="GO:0034220">
    <property type="term" value="P:monoatomic ion transmembrane transport"/>
    <property type="evidence" value="ECO:0000250"/>
    <property type="project" value="FlyBase"/>
</dbReference>
<dbReference type="GO" id="GO:0050909">
    <property type="term" value="P:sensory perception of taste"/>
    <property type="evidence" value="ECO:0000303"/>
    <property type="project" value="UniProtKB"/>
</dbReference>
<dbReference type="GO" id="GO:0007165">
    <property type="term" value="P:signal transduction"/>
    <property type="evidence" value="ECO:0007669"/>
    <property type="project" value="UniProtKB-KW"/>
</dbReference>
<dbReference type="InterPro" id="IPR013604">
    <property type="entry name" value="7TM_chemorcpt"/>
</dbReference>
<dbReference type="Pfam" id="PF08395">
    <property type="entry name" value="7tm_7"/>
    <property type="match status" value="1"/>
</dbReference>
<name>GR22A_DROME</name>
<keyword id="KW-1003">Cell membrane</keyword>
<keyword id="KW-0325">Glycoprotein</keyword>
<keyword id="KW-0472">Membrane</keyword>
<keyword id="KW-0675">Receptor</keyword>
<keyword id="KW-1185">Reference proteome</keyword>
<keyword id="KW-0807">Transducer</keyword>
<keyword id="KW-0812">Transmembrane</keyword>
<keyword id="KW-1133">Transmembrane helix</keyword>
<comment type="function">
    <text evidence="1">Probable gustatory receptor which mediates acceptance or avoidance behavior, depending on its substrates.</text>
</comment>
<comment type="subcellular location">
    <subcellularLocation>
        <location evidence="1">Cell membrane</location>
        <topology evidence="1">Multi-pass membrane protein</topology>
    </subcellularLocation>
</comment>
<comment type="tissue specificity">
    <text evidence="3">Expressed in neurons of the terminal external chemosensory organ of larvae.</text>
</comment>
<comment type="similarity">
    <text evidence="4">Belongs to the insect chemoreceptor superfamily. Gustatory receptor (GR) family. Gr22e subfamily.</text>
</comment>